<reference key="1">
    <citation type="journal article" date="2003" name="Genome Res.">
        <title>Tropheryma whipplei twist: a human pathogenic Actinobacteria with a reduced genome.</title>
        <authorList>
            <person name="Raoult D."/>
            <person name="Ogata H."/>
            <person name="Audic S."/>
            <person name="Robert C."/>
            <person name="Suhre K."/>
            <person name="Drancourt M."/>
            <person name="Claverie J.-M."/>
        </authorList>
    </citation>
    <scope>NUCLEOTIDE SEQUENCE [LARGE SCALE GENOMIC DNA]</scope>
    <source>
        <strain>Twist</strain>
    </source>
</reference>
<dbReference type="EMBL" id="AE014184">
    <property type="protein sequence ID" value="AAO44611.1"/>
    <property type="molecule type" value="Genomic_DNA"/>
</dbReference>
<dbReference type="RefSeq" id="WP_011096205.1">
    <property type="nucleotide sequence ID" value="NC_004572.3"/>
</dbReference>
<dbReference type="SMR" id="Q83G21"/>
<dbReference type="STRING" id="203267.TWT_514"/>
<dbReference type="KEGG" id="twh:TWT_514"/>
<dbReference type="eggNOG" id="COG1799">
    <property type="taxonomic scope" value="Bacteria"/>
</dbReference>
<dbReference type="HOGENOM" id="CLU_078499_0_2_11"/>
<dbReference type="OrthoDB" id="3731101at2"/>
<dbReference type="Proteomes" id="UP000002200">
    <property type="component" value="Chromosome"/>
</dbReference>
<dbReference type="GO" id="GO:0005737">
    <property type="term" value="C:cytoplasm"/>
    <property type="evidence" value="ECO:0007669"/>
    <property type="project" value="UniProtKB-SubCell"/>
</dbReference>
<dbReference type="GO" id="GO:0000917">
    <property type="term" value="P:division septum assembly"/>
    <property type="evidence" value="ECO:0007669"/>
    <property type="project" value="UniProtKB-KW"/>
</dbReference>
<dbReference type="GO" id="GO:0043093">
    <property type="term" value="P:FtsZ-dependent cytokinesis"/>
    <property type="evidence" value="ECO:0007669"/>
    <property type="project" value="UniProtKB-UniRule"/>
</dbReference>
<dbReference type="Gene3D" id="3.30.110.150">
    <property type="entry name" value="SepF-like protein"/>
    <property type="match status" value="1"/>
</dbReference>
<dbReference type="HAMAP" id="MF_01197">
    <property type="entry name" value="SepF"/>
    <property type="match status" value="1"/>
</dbReference>
<dbReference type="InterPro" id="IPR023052">
    <property type="entry name" value="Cell_div_SepF"/>
</dbReference>
<dbReference type="InterPro" id="IPR007561">
    <property type="entry name" value="Cell_div_SepF/SepF-rel"/>
</dbReference>
<dbReference type="InterPro" id="IPR038594">
    <property type="entry name" value="SepF-like_sf"/>
</dbReference>
<dbReference type="PANTHER" id="PTHR35798">
    <property type="entry name" value="CELL DIVISION PROTEIN SEPF"/>
    <property type="match status" value="1"/>
</dbReference>
<dbReference type="PANTHER" id="PTHR35798:SF1">
    <property type="entry name" value="CELL DIVISION PROTEIN SEPF"/>
    <property type="match status" value="1"/>
</dbReference>
<dbReference type="Pfam" id="PF04472">
    <property type="entry name" value="SepF"/>
    <property type="match status" value="1"/>
</dbReference>
<name>SEPF_TROWT</name>
<protein>
    <recommendedName>
        <fullName evidence="1">Cell division protein SepF</fullName>
    </recommendedName>
</protein>
<proteinExistence type="inferred from homology"/>
<gene>
    <name evidence="1" type="primary">sepF</name>
    <name type="ordered locus">TWT_514</name>
</gene>
<comment type="function">
    <text evidence="1">Cell division protein that is part of the divisome complex and is recruited early to the Z-ring. Probably stimulates Z-ring formation, perhaps through the cross-linking of FtsZ protofilaments. Its function overlaps with FtsA.</text>
</comment>
<comment type="subunit">
    <text evidence="1">Homodimer. Interacts with FtsZ.</text>
</comment>
<comment type="subcellular location">
    <subcellularLocation>
        <location evidence="1">Cytoplasm</location>
    </subcellularLocation>
    <text evidence="1">Localizes to the division site, in a FtsZ-dependent manner.</text>
</comment>
<comment type="similarity">
    <text evidence="1">Belongs to the SepF family.</text>
</comment>
<evidence type="ECO:0000255" key="1">
    <source>
        <dbReference type="HAMAP-Rule" id="MF_01197"/>
    </source>
</evidence>
<accession>Q83G21</accession>
<sequence length="123" mass="13751">MAGGLKKAMVYLGLAEDNQELHSAPSGMSHLRRVPHPKQQMSEIFTFHPKKYSEVSGIVERFRQNIPVIIDMSQLSDTDARRMIDFASGLSQGLVGKIERVVGKVFLLSPEHISISTESKKEE</sequence>
<keyword id="KW-0131">Cell cycle</keyword>
<keyword id="KW-0132">Cell division</keyword>
<keyword id="KW-0963">Cytoplasm</keyword>
<keyword id="KW-1185">Reference proteome</keyword>
<keyword id="KW-0717">Septation</keyword>
<feature type="chain" id="PRO_0000334137" description="Cell division protein SepF">
    <location>
        <begin position="1"/>
        <end position="123"/>
    </location>
</feature>
<organism>
    <name type="scientific">Tropheryma whipplei (strain Twist)</name>
    <name type="common">Whipple's bacillus</name>
    <dbReference type="NCBI Taxonomy" id="203267"/>
    <lineage>
        <taxon>Bacteria</taxon>
        <taxon>Bacillati</taxon>
        <taxon>Actinomycetota</taxon>
        <taxon>Actinomycetes</taxon>
        <taxon>Micrococcales</taxon>
        <taxon>Tropherymataceae</taxon>
        <taxon>Tropheryma</taxon>
    </lineage>
</organism>